<comment type="function">
    <text evidence="1">Binds together with bS18 to 16S ribosomal RNA.</text>
</comment>
<comment type="similarity">
    <text evidence="1">Belongs to the bacterial ribosomal protein bS6 family.</text>
</comment>
<organism>
    <name type="scientific">Hydrogenovibrio crunogenus (strain DSM 25203 / XCL-2)</name>
    <name type="common">Thiomicrospira crunogena</name>
    <dbReference type="NCBI Taxonomy" id="317025"/>
    <lineage>
        <taxon>Bacteria</taxon>
        <taxon>Pseudomonadati</taxon>
        <taxon>Pseudomonadota</taxon>
        <taxon>Gammaproteobacteria</taxon>
        <taxon>Thiotrichales</taxon>
        <taxon>Piscirickettsiaceae</taxon>
        <taxon>Hydrogenovibrio</taxon>
    </lineage>
</organism>
<protein>
    <recommendedName>
        <fullName evidence="1">Small ribosomal subunit protein bS6</fullName>
    </recommendedName>
    <alternativeName>
        <fullName evidence="2">30S ribosomal protein S6</fullName>
    </alternativeName>
</protein>
<reference key="1">
    <citation type="journal article" date="2006" name="PLoS Biol.">
        <title>The genome of deep-sea vent chemolithoautotroph Thiomicrospira crunogena XCL-2.</title>
        <authorList>
            <person name="Scott K.M."/>
            <person name="Sievert S.M."/>
            <person name="Abril F.N."/>
            <person name="Ball L.A."/>
            <person name="Barrett C.J."/>
            <person name="Blake R.A."/>
            <person name="Boller A.J."/>
            <person name="Chain P.S.G."/>
            <person name="Clark J.A."/>
            <person name="Davis C.R."/>
            <person name="Detter C."/>
            <person name="Do K.F."/>
            <person name="Dobrinski K.P."/>
            <person name="Faza B.I."/>
            <person name="Fitzpatrick K.A."/>
            <person name="Freyermuth S.K."/>
            <person name="Harmer T.L."/>
            <person name="Hauser L.J."/>
            <person name="Huegler M."/>
            <person name="Kerfeld C.A."/>
            <person name="Klotz M.G."/>
            <person name="Kong W.W."/>
            <person name="Land M."/>
            <person name="Lapidus A."/>
            <person name="Larimer F.W."/>
            <person name="Longo D.L."/>
            <person name="Lucas S."/>
            <person name="Malfatti S.A."/>
            <person name="Massey S.E."/>
            <person name="Martin D.D."/>
            <person name="McCuddin Z."/>
            <person name="Meyer F."/>
            <person name="Moore J.L."/>
            <person name="Ocampo L.H. Jr."/>
            <person name="Paul J.H."/>
            <person name="Paulsen I.T."/>
            <person name="Reep D.K."/>
            <person name="Ren Q."/>
            <person name="Ross R.L."/>
            <person name="Sato P.Y."/>
            <person name="Thomas P."/>
            <person name="Tinkham L.E."/>
            <person name="Zeruth G.T."/>
        </authorList>
    </citation>
    <scope>NUCLEOTIDE SEQUENCE [LARGE SCALE GENOMIC DNA]</scope>
    <source>
        <strain>DSM 25203 / XCL-2</strain>
    </source>
</reference>
<dbReference type="EMBL" id="CP000109">
    <property type="protein sequence ID" value="ABB41959.1"/>
    <property type="molecule type" value="Genomic_DNA"/>
</dbReference>
<dbReference type="SMR" id="Q31FW4"/>
<dbReference type="STRING" id="317025.Tcr_1364"/>
<dbReference type="KEGG" id="tcx:Tcr_1364"/>
<dbReference type="eggNOG" id="COG0360">
    <property type="taxonomic scope" value="Bacteria"/>
</dbReference>
<dbReference type="HOGENOM" id="CLU_113441_6_1_6"/>
<dbReference type="OrthoDB" id="9812702at2"/>
<dbReference type="GO" id="GO:0022627">
    <property type="term" value="C:cytosolic small ribosomal subunit"/>
    <property type="evidence" value="ECO:0007669"/>
    <property type="project" value="TreeGrafter"/>
</dbReference>
<dbReference type="GO" id="GO:0070181">
    <property type="term" value="F:small ribosomal subunit rRNA binding"/>
    <property type="evidence" value="ECO:0007669"/>
    <property type="project" value="TreeGrafter"/>
</dbReference>
<dbReference type="GO" id="GO:0003735">
    <property type="term" value="F:structural constituent of ribosome"/>
    <property type="evidence" value="ECO:0007669"/>
    <property type="project" value="InterPro"/>
</dbReference>
<dbReference type="GO" id="GO:0006412">
    <property type="term" value="P:translation"/>
    <property type="evidence" value="ECO:0007669"/>
    <property type="project" value="UniProtKB-UniRule"/>
</dbReference>
<dbReference type="CDD" id="cd00473">
    <property type="entry name" value="bS6"/>
    <property type="match status" value="1"/>
</dbReference>
<dbReference type="Gene3D" id="3.30.70.60">
    <property type="match status" value="1"/>
</dbReference>
<dbReference type="HAMAP" id="MF_00360">
    <property type="entry name" value="Ribosomal_bS6"/>
    <property type="match status" value="1"/>
</dbReference>
<dbReference type="InterPro" id="IPR000529">
    <property type="entry name" value="Ribosomal_bS6"/>
</dbReference>
<dbReference type="InterPro" id="IPR020815">
    <property type="entry name" value="Ribosomal_bS6_CS"/>
</dbReference>
<dbReference type="InterPro" id="IPR035980">
    <property type="entry name" value="Ribosomal_bS6_sf"/>
</dbReference>
<dbReference type="InterPro" id="IPR020814">
    <property type="entry name" value="Ribosomal_S6_plastid/chlpt"/>
</dbReference>
<dbReference type="InterPro" id="IPR014717">
    <property type="entry name" value="Transl_elong_EF1B/ribsomal_bS6"/>
</dbReference>
<dbReference type="NCBIfam" id="TIGR00166">
    <property type="entry name" value="S6"/>
    <property type="match status" value="1"/>
</dbReference>
<dbReference type="PANTHER" id="PTHR21011">
    <property type="entry name" value="MITOCHONDRIAL 28S RIBOSOMAL PROTEIN S6"/>
    <property type="match status" value="1"/>
</dbReference>
<dbReference type="PANTHER" id="PTHR21011:SF1">
    <property type="entry name" value="SMALL RIBOSOMAL SUBUNIT PROTEIN BS6M"/>
    <property type="match status" value="1"/>
</dbReference>
<dbReference type="Pfam" id="PF01250">
    <property type="entry name" value="Ribosomal_S6"/>
    <property type="match status" value="1"/>
</dbReference>
<dbReference type="SUPFAM" id="SSF54995">
    <property type="entry name" value="Ribosomal protein S6"/>
    <property type="match status" value="1"/>
</dbReference>
<dbReference type="PROSITE" id="PS01048">
    <property type="entry name" value="RIBOSOMAL_S6"/>
    <property type="match status" value="1"/>
</dbReference>
<gene>
    <name evidence="1" type="primary">rpsF</name>
    <name type="ordered locus">Tcr_1364</name>
</gene>
<proteinExistence type="inferred from homology"/>
<keyword id="KW-0687">Ribonucleoprotein</keyword>
<keyword id="KW-0689">Ribosomal protein</keyword>
<keyword id="KW-0694">RNA-binding</keyword>
<keyword id="KW-0699">rRNA-binding</keyword>
<feature type="chain" id="PRO_0000229587" description="Small ribosomal subunit protein bS6">
    <location>
        <begin position="1"/>
        <end position="114"/>
    </location>
</feature>
<evidence type="ECO:0000255" key="1">
    <source>
        <dbReference type="HAMAP-Rule" id="MF_00360"/>
    </source>
</evidence>
<evidence type="ECO:0000305" key="2"/>
<accession>Q31FW4</accession>
<name>RS6_HYDCU</name>
<sequence length="114" mass="13592">MRHYEVVFLVHPDQSEQVPAMIERYRGLIEENGGAIHRLEDWGRRQLAYLINKVHKAHYILMNIECDQETLKELENLFYYNDAVLRDMFIKRNEAVTEPSVMASQKEDKRRGDK</sequence>